<name>RS16B_SCHPO</name>
<reference key="1">
    <citation type="journal article" date="2002" name="Nature">
        <title>The genome sequence of Schizosaccharomyces pombe.</title>
        <authorList>
            <person name="Wood V."/>
            <person name="Gwilliam R."/>
            <person name="Rajandream M.A."/>
            <person name="Lyne M.H."/>
            <person name="Lyne R."/>
            <person name="Stewart A."/>
            <person name="Sgouros J.G."/>
            <person name="Peat N."/>
            <person name="Hayles J."/>
            <person name="Baker S.G."/>
            <person name="Basham D."/>
            <person name="Bowman S."/>
            <person name="Brooks K."/>
            <person name="Brown D."/>
            <person name="Brown S."/>
            <person name="Chillingworth T."/>
            <person name="Churcher C.M."/>
            <person name="Collins M."/>
            <person name="Connor R."/>
            <person name="Cronin A."/>
            <person name="Davis P."/>
            <person name="Feltwell T."/>
            <person name="Fraser A."/>
            <person name="Gentles S."/>
            <person name="Goble A."/>
            <person name="Hamlin N."/>
            <person name="Harris D.E."/>
            <person name="Hidalgo J."/>
            <person name="Hodgson G."/>
            <person name="Holroyd S."/>
            <person name="Hornsby T."/>
            <person name="Howarth S."/>
            <person name="Huckle E.J."/>
            <person name="Hunt S."/>
            <person name="Jagels K."/>
            <person name="James K.D."/>
            <person name="Jones L."/>
            <person name="Jones M."/>
            <person name="Leather S."/>
            <person name="McDonald S."/>
            <person name="McLean J."/>
            <person name="Mooney P."/>
            <person name="Moule S."/>
            <person name="Mungall K.L."/>
            <person name="Murphy L.D."/>
            <person name="Niblett D."/>
            <person name="Odell C."/>
            <person name="Oliver K."/>
            <person name="O'Neil S."/>
            <person name="Pearson D."/>
            <person name="Quail M.A."/>
            <person name="Rabbinowitsch E."/>
            <person name="Rutherford K.M."/>
            <person name="Rutter S."/>
            <person name="Saunders D."/>
            <person name="Seeger K."/>
            <person name="Sharp S."/>
            <person name="Skelton J."/>
            <person name="Simmonds M.N."/>
            <person name="Squares R."/>
            <person name="Squares S."/>
            <person name="Stevens K."/>
            <person name="Taylor K."/>
            <person name="Taylor R.G."/>
            <person name="Tivey A."/>
            <person name="Walsh S.V."/>
            <person name="Warren T."/>
            <person name="Whitehead S."/>
            <person name="Woodward J.R."/>
            <person name="Volckaert G."/>
            <person name="Aert R."/>
            <person name="Robben J."/>
            <person name="Grymonprez B."/>
            <person name="Weltjens I."/>
            <person name="Vanstreels E."/>
            <person name="Rieger M."/>
            <person name="Schaefer M."/>
            <person name="Mueller-Auer S."/>
            <person name="Gabel C."/>
            <person name="Fuchs M."/>
            <person name="Duesterhoeft A."/>
            <person name="Fritzc C."/>
            <person name="Holzer E."/>
            <person name="Moestl D."/>
            <person name="Hilbert H."/>
            <person name="Borzym K."/>
            <person name="Langer I."/>
            <person name="Beck A."/>
            <person name="Lehrach H."/>
            <person name="Reinhardt R."/>
            <person name="Pohl T.M."/>
            <person name="Eger P."/>
            <person name="Zimmermann W."/>
            <person name="Wedler H."/>
            <person name="Wambutt R."/>
            <person name="Purnelle B."/>
            <person name="Goffeau A."/>
            <person name="Cadieu E."/>
            <person name="Dreano S."/>
            <person name="Gloux S."/>
            <person name="Lelaure V."/>
            <person name="Mottier S."/>
            <person name="Galibert F."/>
            <person name="Aves S.J."/>
            <person name="Xiang Z."/>
            <person name="Hunt C."/>
            <person name="Moore K."/>
            <person name="Hurst S.M."/>
            <person name="Lucas M."/>
            <person name="Rochet M."/>
            <person name="Gaillardin C."/>
            <person name="Tallada V.A."/>
            <person name="Garzon A."/>
            <person name="Thode G."/>
            <person name="Daga R.R."/>
            <person name="Cruzado L."/>
            <person name="Jimenez J."/>
            <person name="Sanchez M."/>
            <person name="del Rey F."/>
            <person name="Benito J."/>
            <person name="Dominguez A."/>
            <person name="Revuelta J.L."/>
            <person name="Moreno S."/>
            <person name="Armstrong J."/>
            <person name="Forsburg S.L."/>
            <person name="Cerutti L."/>
            <person name="Lowe T."/>
            <person name="McCombie W.R."/>
            <person name="Paulsen I."/>
            <person name="Potashkin J."/>
            <person name="Shpakovski G.V."/>
            <person name="Ussery D."/>
            <person name="Barrell B.G."/>
            <person name="Nurse P."/>
        </authorList>
    </citation>
    <scope>NUCLEOTIDE SEQUENCE [LARGE SCALE GENOMIC DNA]</scope>
    <source>
        <strain>972 / ATCC 24843</strain>
    </source>
</reference>
<reference key="2">
    <citation type="journal article" date="2006" name="Nat. Biotechnol.">
        <title>ORFeome cloning and global analysis of protein localization in the fission yeast Schizosaccharomyces pombe.</title>
        <authorList>
            <person name="Matsuyama A."/>
            <person name="Arai R."/>
            <person name="Yashiroda Y."/>
            <person name="Shirai A."/>
            <person name="Kamata A."/>
            <person name="Sekido S."/>
            <person name="Kobayashi Y."/>
            <person name="Hashimoto A."/>
            <person name="Hamamoto M."/>
            <person name="Hiraoka Y."/>
            <person name="Horinouchi S."/>
            <person name="Yoshida M."/>
        </authorList>
    </citation>
    <scope>SUBCELLULAR LOCATION [LARGE SCALE ANALYSIS]</scope>
</reference>
<comment type="function">
    <text evidence="1">Component of the ribosome, a large ribonucleoprotein complex responsible for the synthesis of proteins in the cell. The small ribosomal subunit (SSU) binds messenger RNAs (mRNAs) and translates the encoded message by selecting cognate aminoacyl-transfer RNA (tRNA) molecules. The large subunit (LSU) contains the ribosomal catalytic site termed the peptidyl transferase center (PTC), which catalyzes the formation of peptide bonds, thereby polymerizing the amino acids delivered by tRNAs into a polypeptide chain. The nascent polypeptides leave the ribosome through a tunnel in the LSU and interact with protein factors that function in enzymatic processing, targeting, and the membrane insertion of nascent chains at the exit of the ribosomal tunnel.</text>
</comment>
<comment type="subunit">
    <text evidence="1">Component of the small ribosomal subunit (SSU). Mature yeast ribosomes consist of a small (40S) and a large (60S) subunit. The 40S small subunit contains 1 molecule of ribosomal RNA (18S rRNA) and at least 33 different proteins. The large 60S subunit contains 3 rRNA molecules (25S, 5.8S and 5S rRNA) and at least 46 different proteins.</text>
</comment>
<comment type="subcellular location">
    <subcellularLocation>
        <location evidence="2">Cytoplasm</location>
    </subcellularLocation>
</comment>
<comment type="miscellaneous">
    <text>There are 2 genes for uS9 in S.pombe.</text>
</comment>
<comment type="similarity">
    <text evidence="3">Belongs to the universal ribosomal protein uS9 family.</text>
</comment>
<keyword id="KW-0963">Cytoplasm</keyword>
<keyword id="KW-1185">Reference proteome</keyword>
<keyword id="KW-0687">Ribonucleoprotein</keyword>
<keyword id="KW-0689">Ribosomal protein</keyword>
<organism>
    <name type="scientific">Schizosaccharomyces pombe (strain 972 / ATCC 24843)</name>
    <name type="common">Fission yeast</name>
    <dbReference type="NCBI Taxonomy" id="284812"/>
    <lineage>
        <taxon>Eukaryota</taxon>
        <taxon>Fungi</taxon>
        <taxon>Dikarya</taxon>
        <taxon>Ascomycota</taxon>
        <taxon>Taphrinomycotina</taxon>
        <taxon>Schizosaccharomycetes</taxon>
        <taxon>Schizosaccharomycetales</taxon>
        <taxon>Schizosaccharomycetaceae</taxon>
        <taxon>Schizosaccharomyces</taxon>
    </lineage>
</organism>
<sequence length="140" mass="15395">MQSVQCFGKKGNATAVAHCKVGKGLIKVNGAPLSLVQPEILRMKVYEPILVAGADKFAGVDIRVRVSGGGHVSQIYAIRQAISKAIVAYYQKFVDEHSKAELKKALITYDRTLLVADPRRMEPKKFGGHGARARQQKSYR</sequence>
<accession>P0CT65</accession>
<accession>O60144</accession>
<accession>Q9URK4</accession>
<feature type="chain" id="PRO_0000433419" description="Small ribosomal subunit protein uS9B">
    <location>
        <begin position="1"/>
        <end position="140"/>
    </location>
</feature>
<evidence type="ECO:0000250" key="1">
    <source>
        <dbReference type="UniProtKB" id="P0CX52"/>
    </source>
</evidence>
<evidence type="ECO:0000269" key="2">
    <source>
    </source>
</evidence>
<evidence type="ECO:0000305" key="3"/>
<dbReference type="EMBL" id="CU329670">
    <property type="protein sequence ID" value="CAB65805.1"/>
    <property type="molecule type" value="Genomic_DNA"/>
</dbReference>
<dbReference type="PIR" id="T39778">
    <property type="entry name" value="T39778"/>
</dbReference>
<dbReference type="PIR" id="T43419">
    <property type="entry name" value="T43419"/>
</dbReference>
<dbReference type="RefSeq" id="NP_593452.1">
    <property type="nucleotide sequence ID" value="NM_001018885.2"/>
</dbReference>
<dbReference type="SMR" id="P0CT65"/>
<dbReference type="FunCoup" id="P0CT65">
    <property type="interactions" value="277"/>
</dbReference>
<dbReference type="STRING" id="284812.P0CT65"/>
<dbReference type="iPTMnet" id="P0CT65"/>
<dbReference type="EnsemblFungi" id="SPAC664.04c.1">
    <property type="protein sequence ID" value="SPAC664.04c.1:pep"/>
    <property type="gene ID" value="SPAC664.04c"/>
</dbReference>
<dbReference type="EnsemblFungi" id="SPBC18H10.14.1">
    <property type="protein sequence ID" value="SPBC18H10.14.1:pep"/>
    <property type="gene ID" value="SPBC18H10.14"/>
</dbReference>
<dbReference type="GeneID" id="2543559"/>
<dbReference type="KEGG" id="spo:2540812"/>
<dbReference type="KEGG" id="spo:2543559"/>
<dbReference type="PomBase" id="SPAC664.04c">
    <property type="gene designation" value="rps1602"/>
</dbReference>
<dbReference type="VEuPathDB" id="FungiDB:SPAC664.04c"/>
<dbReference type="VEuPathDB" id="FungiDB:SPBC18H10.14"/>
<dbReference type="InParanoid" id="P0CT65"/>
<dbReference type="OMA" id="WPIEMAR"/>
<dbReference type="PhylomeDB" id="P0CT65"/>
<dbReference type="Reactome" id="R-SPO-156827">
    <property type="pathway name" value="L13a-mediated translational silencing of Ceruloplasmin expression"/>
</dbReference>
<dbReference type="Reactome" id="R-SPO-1799339">
    <property type="pathway name" value="SRP-dependent cotranslational protein targeting to membrane"/>
</dbReference>
<dbReference type="Reactome" id="R-SPO-72649">
    <property type="pathway name" value="Translation initiation complex formation"/>
</dbReference>
<dbReference type="Reactome" id="R-SPO-72689">
    <property type="pathway name" value="Formation of a pool of free 40S subunits"/>
</dbReference>
<dbReference type="Reactome" id="R-SPO-72695">
    <property type="pathway name" value="Formation of the ternary complex, and subsequently, the 43S complex"/>
</dbReference>
<dbReference type="Reactome" id="R-SPO-72702">
    <property type="pathway name" value="Ribosomal scanning and start codon recognition"/>
</dbReference>
<dbReference type="Reactome" id="R-SPO-72706">
    <property type="pathway name" value="GTP hydrolysis and joining of the 60S ribosomal subunit"/>
</dbReference>
<dbReference type="Reactome" id="R-SPO-975956">
    <property type="pathway name" value="Nonsense Mediated Decay (NMD) independent of the Exon Junction Complex (EJC)"/>
</dbReference>
<dbReference type="Reactome" id="R-SPO-975957">
    <property type="pathway name" value="Nonsense Mediated Decay (NMD) enhanced by the Exon Junction Complex (EJC)"/>
</dbReference>
<dbReference type="PRO" id="PR:P0CT65"/>
<dbReference type="Proteomes" id="UP000002485">
    <property type="component" value="Chromosome I"/>
</dbReference>
<dbReference type="ExpressionAtlas" id="P0CT65">
    <property type="expression patterns" value="differential"/>
</dbReference>
<dbReference type="GO" id="GO:0005829">
    <property type="term" value="C:cytosol"/>
    <property type="evidence" value="ECO:0007005"/>
    <property type="project" value="PomBase"/>
</dbReference>
<dbReference type="GO" id="GO:0022627">
    <property type="term" value="C:cytosolic small ribosomal subunit"/>
    <property type="evidence" value="ECO:0000318"/>
    <property type="project" value="GO_Central"/>
</dbReference>
<dbReference type="GO" id="GO:0003723">
    <property type="term" value="F:RNA binding"/>
    <property type="evidence" value="ECO:0000318"/>
    <property type="project" value="GO_Central"/>
</dbReference>
<dbReference type="GO" id="GO:0003735">
    <property type="term" value="F:structural constituent of ribosome"/>
    <property type="evidence" value="ECO:0000318"/>
    <property type="project" value="GO_Central"/>
</dbReference>
<dbReference type="GO" id="GO:0002181">
    <property type="term" value="P:cytoplasmic translation"/>
    <property type="evidence" value="ECO:0000266"/>
    <property type="project" value="PomBase"/>
</dbReference>
<dbReference type="GO" id="GO:0000462">
    <property type="term" value="P:maturation of SSU-rRNA from tricistronic rRNA transcript (SSU-rRNA, 5.8S rRNA, LSU-rRNA)"/>
    <property type="evidence" value="ECO:0000318"/>
    <property type="project" value="GO_Central"/>
</dbReference>
<dbReference type="FunFam" id="3.30.230.10:FF:000007">
    <property type="entry name" value="40S ribosomal protein S16"/>
    <property type="match status" value="1"/>
</dbReference>
<dbReference type="Gene3D" id="3.30.230.10">
    <property type="match status" value="1"/>
</dbReference>
<dbReference type="InterPro" id="IPR020568">
    <property type="entry name" value="Ribosomal_Su5_D2-typ_SF"/>
</dbReference>
<dbReference type="InterPro" id="IPR000754">
    <property type="entry name" value="Ribosomal_uS9"/>
</dbReference>
<dbReference type="InterPro" id="IPR020574">
    <property type="entry name" value="Ribosomal_uS9_CS"/>
</dbReference>
<dbReference type="InterPro" id="IPR014721">
    <property type="entry name" value="Ribsml_uS5_D2-typ_fold_subgr"/>
</dbReference>
<dbReference type="NCBIfam" id="NF001749">
    <property type="entry name" value="PRK00474.1"/>
    <property type="match status" value="1"/>
</dbReference>
<dbReference type="PANTHER" id="PTHR21569:SF16">
    <property type="entry name" value="RIBOSOMAL PROTEIN S16"/>
    <property type="match status" value="1"/>
</dbReference>
<dbReference type="PANTHER" id="PTHR21569">
    <property type="entry name" value="RIBOSOMAL PROTEIN S9"/>
    <property type="match status" value="1"/>
</dbReference>
<dbReference type="Pfam" id="PF00380">
    <property type="entry name" value="Ribosomal_S9"/>
    <property type="match status" value="1"/>
</dbReference>
<dbReference type="SUPFAM" id="SSF54211">
    <property type="entry name" value="Ribosomal protein S5 domain 2-like"/>
    <property type="match status" value="1"/>
</dbReference>
<dbReference type="PROSITE" id="PS00360">
    <property type="entry name" value="RIBOSOMAL_S9"/>
    <property type="match status" value="1"/>
</dbReference>
<proteinExistence type="inferred from homology"/>
<gene>
    <name type="primary">rps1602</name>
    <name type="synonym">rps16b</name>
    <name type="ORF">SPAC664.04c</name>
</gene>
<protein>
    <recommendedName>
        <fullName evidence="3">Small ribosomal subunit protein uS9B</fullName>
    </recommendedName>
    <alternativeName>
        <fullName>40S ribosomal protein S16-B</fullName>
    </alternativeName>
</protein>